<keyword id="KW-0129">CBS domain</keyword>
<keyword id="KW-0963">Cytoplasm</keyword>
<keyword id="KW-0539">Nucleus</keyword>
<keyword id="KW-1185">Reference proteome</keyword>
<keyword id="KW-0677">Repeat</keyword>
<protein>
    <recommendedName>
        <fullName>Protein SDS23</fullName>
    </recommendedName>
</protein>
<gene>
    <name type="primary">SDS23</name>
    <name type="ordered locus">KLLA0C05588g</name>
</gene>
<sequence length="518" mass="56011">MQSSGSSASSSRHVSIVELLSTPPNAGVPSNSAAPSSSSRVAAQAQVQSQSQSPKLSATAAAAAAATADNFGNGNSNFGQAGAGTPAGSHIHHGSDAESISSISSASTTSMHCPLERTGSGTGSGYVPGPNSDVPISPSLSAVDTLHSHSVSRTNSESSFDTQLSRIHTTKWQLIPLSQLVEQNKLIFIDGSISVEEAFNTLVKYNLTSLPVENSPDDIDCLTFDYNDLNSYLLLVLNKITVNNPEVTRQCQLGHPVPVGEIIKLTPKNPFYKLPEQENLSTAMMILGSGVHRVAITNQENTKITGILSQRRLIKYLWDNARSFQNFEHLFQKSLKDLKIGVLDTHTKPTSRQSRVISIQGDELLIMALFKMHTERISSIAVIDPQGNLLGNISVTDVKHITRTSQYPLLQNTCLHFISVILDKRGIEMGKDSFPIFHVYPTSSLARTIAKLVATKAHRLWIVQPSGDTPVDSEKDKRSGKLIGVVSLTDILGLLARHQTEFKRVDPLAARRQRGSIV</sequence>
<reference key="1">
    <citation type="journal article" date="2004" name="Nature">
        <title>Genome evolution in yeasts.</title>
        <authorList>
            <person name="Dujon B."/>
            <person name="Sherman D."/>
            <person name="Fischer G."/>
            <person name="Durrens P."/>
            <person name="Casaregola S."/>
            <person name="Lafontaine I."/>
            <person name="de Montigny J."/>
            <person name="Marck C."/>
            <person name="Neuveglise C."/>
            <person name="Talla E."/>
            <person name="Goffard N."/>
            <person name="Frangeul L."/>
            <person name="Aigle M."/>
            <person name="Anthouard V."/>
            <person name="Babour A."/>
            <person name="Barbe V."/>
            <person name="Barnay S."/>
            <person name="Blanchin S."/>
            <person name="Beckerich J.-M."/>
            <person name="Beyne E."/>
            <person name="Bleykasten C."/>
            <person name="Boisrame A."/>
            <person name="Boyer J."/>
            <person name="Cattolico L."/>
            <person name="Confanioleri F."/>
            <person name="de Daruvar A."/>
            <person name="Despons L."/>
            <person name="Fabre E."/>
            <person name="Fairhead C."/>
            <person name="Ferry-Dumazet H."/>
            <person name="Groppi A."/>
            <person name="Hantraye F."/>
            <person name="Hennequin C."/>
            <person name="Jauniaux N."/>
            <person name="Joyet P."/>
            <person name="Kachouri R."/>
            <person name="Kerrest A."/>
            <person name="Koszul R."/>
            <person name="Lemaire M."/>
            <person name="Lesur I."/>
            <person name="Ma L."/>
            <person name="Muller H."/>
            <person name="Nicaud J.-M."/>
            <person name="Nikolski M."/>
            <person name="Oztas S."/>
            <person name="Ozier-Kalogeropoulos O."/>
            <person name="Pellenz S."/>
            <person name="Potier S."/>
            <person name="Richard G.-F."/>
            <person name="Straub M.-L."/>
            <person name="Suleau A."/>
            <person name="Swennen D."/>
            <person name="Tekaia F."/>
            <person name="Wesolowski-Louvel M."/>
            <person name="Westhof E."/>
            <person name="Wirth B."/>
            <person name="Zeniou-Meyer M."/>
            <person name="Zivanovic Y."/>
            <person name="Bolotin-Fukuhara M."/>
            <person name="Thierry A."/>
            <person name="Bouchier C."/>
            <person name="Caudron B."/>
            <person name="Scarpelli C."/>
            <person name="Gaillardin C."/>
            <person name="Weissenbach J."/>
            <person name="Wincker P."/>
            <person name="Souciet J.-L."/>
        </authorList>
    </citation>
    <scope>NUCLEOTIDE SEQUENCE [LARGE SCALE GENOMIC DNA]</scope>
    <source>
        <strain>ATCC 8585 / CBS 2359 / DSM 70799 / NBRC 1267 / NRRL Y-1140 / WM37</strain>
    </source>
</reference>
<comment type="function">
    <text evidence="1">Involved in DNA replication and cell separation.</text>
</comment>
<comment type="subcellular location">
    <subcellularLocation>
        <location evidence="1">Cytoplasm</location>
    </subcellularLocation>
    <subcellularLocation>
        <location evidence="1">Nucleus</location>
    </subcellularLocation>
</comment>
<comment type="similarity">
    <text evidence="4">Belongs to the SDS23 family.</text>
</comment>
<feature type="chain" id="PRO_0000324953" description="Protein SDS23">
    <location>
        <begin position="1"/>
        <end position="518"/>
    </location>
</feature>
<feature type="domain" description="CBS 1" evidence="2">
    <location>
        <begin position="181"/>
        <end position="242"/>
    </location>
</feature>
<feature type="domain" description="CBS 2" evidence="2">
    <location>
        <begin position="265"/>
        <end position="323"/>
    </location>
</feature>
<feature type="domain" description="CBS 3" evidence="2">
    <location>
        <begin position="350"/>
        <end position="409"/>
    </location>
</feature>
<feature type="domain" description="CBS 4" evidence="2">
    <location>
        <begin position="429"/>
        <end position="501"/>
    </location>
</feature>
<feature type="region of interest" description="Disordered" evidence="3">
    <location>
        <begin position="1"/>
        <end position="54"/>
    </location>
</feature>
<feature type="region of interest" description="Disordered" evidence="3">
    <location>
        <begin position="77"/>
        <end position="140"/>
    </location>
</feature>
<feature type="compositionally biased region" description="Low complexity" evidence="3">
    <location>
        <begin position="1"/>
        <end position="14"/>
    </location>
</feature>
<feature type="compositionally biased region" description="Low complexity" evidence="3">
    <location>
        <begin position="23"/>
        <end position="54"/>
    </location>
</feature>
<feature type="compositionally biased region" description="Low complexity" evidence="3">
    <location>
        <begin position="97"/>
        <end position="110"/>
    </location>
</feature>
<evidence type="ECO:0000250" key="1"/>
<evidence type="ECO:0000255" key="2">
    <source>
        <dbReference type="PROSITE-ProRule" id="PRU00703"/>
    </source>
</evidence>
<evidence type="ECO:0000256" key="3">
    <source>
        <dbReference type="SAM" id="MobiDB-lite"/>
    </source>
</evidence>
<evidence type="ECO:0000305" key="4"/>
<dbReference type="EMBL" id="CR382123">
    <property type="protein sequence ID" value="CAH01299.1"/>
    <property type="molecule type" value="Genomic_DNA"/>
</dbReference>
<dbReference type="RefSeq" id="XP_452448.1">
    <property type="nucleotide sequence ID" value="XM_452448.1"/>
</dbReference>
<dbReference type="SMR" id="Q6CUE1"/>
<dbReference type="FunCoup" id="Q6CUE1">
    <property type="interactions" value="284"/>
</dbReference>
<dbReference type="STRING" id="284590.Q6CUE1"/>
<dbReference type="PaxDb" id="284590-Q6CUE1"/>
<dbReference type="KEGG" id="kla:KLLA0_C05588g"/>
<dbReference type="eggNOG" id="KOG1764">
    <property type="taxonomic scope" value="Eukaryota"/>
</dbReference>
<dbReference type="HOGENOM" id="CLU_024459_1_1_1"/>
<dbReference type="InParanoid" id="Q6CUE1"/>
<dbReference type="OMA" id="MAPTNLC"/>
<dbReference type="Proteomes" id="UP000000598">
    <property type="component" value="Chromosome C"/>
</dbReference>
<dbReference type="GO" id="GO:0005737">
    <property type="term" value="C:cytoplasm"/>
    <property type="evidence" value="ECO:0007669"/>
    <property type="project" value="UniProtKB-SubCell"/>
</dbReference>
<dbReference type="GO" id="GO:0005634">
    <property type="term" value="C:nucleus"/>
    <property type="evidence" value="ECO:0007669"/>
    <property type="project" value="UniProtKB-SubCell"/>
</dbReference>
<dbReference type="GO" id="GO:0004865">
    <property type="term" value="F:protein serine/threonine phosphatase inhibitor activity"/>
    <property type="evidence" value="ECO:0007669"/>
    <property type="project" value="TreeGrafter"/>
</dbReference>
<dbReference type="GO" id="GO:0042149">
    <property type="term" value="P:cellular response to glucose starvation"/>
    <property type="evidence" value="ECO:0007669"/>
    <property type="project" value="InterPro"/>
</dbReference>
<dbReference type="GO" id="GO:0030071">
    <property type="term" value="P:regulation of mitotic metaphase/anaphase transition"/>
    <property type="evidence" value="ECO:0007669"/>
    <property type="project" value="InterPro"/>
</dbReference>
<dbReference type="FunFam" id="3.10.580.10:FF:000035">
    <property type="entry name" value="Protein SDS23"/>
    <property type="match status" value="1"/>
</dbReference>
<dbReference type="FunFam" id="3.10.580.10:FF:000043">
    <property type="entry name" value="Sds23p"/>
    <property type="match status" value="1"/>
</dbReference>
<dbReference type="Gene3D" id="3.10.580.10">
    <property type="entry name" value="CBS-domain"/>
    <property type="match status" value="2"/>
</dbReference>
<dbReference type="InterPro" id="IPR050511">
    <property type="entry name" value="AMPK_gamma/SDS23_families"/>
</dbReference>
<dbReference type="InterPro" id="IPR000644">
    <property type="entry name" value="CBS_dom"/>
</dbReference>
<dbReference type="InterPro" id="IPR046342">
    <property type="entry name" value="CBS_dom_sf"/>
</dbReference>
<dbReference type="InterPro" id="IPR016711">
    <property type="entry name" value="Ssd23"/>
</dbReference>
<dbReference type="PANTHER" id="PTHR13780">
    <property type="entry name" value="AMP-ACTIVATED PROTEIN KINASE, GAMMA REGULATORY SUBUNIT"/>
    <property type="match status" value="1"/>
</dbReference>
<dbReference type="PANTHER" id="PTHR13780:SF36">
    <property type="entry name" value="CBS DOMAIN-CONTAINING PROTEIN"/>
    <property type="match status" value="1"/>
</dbReference>
<dbReference type="Pfam" id="PF00571">
    <property type="entry name" value="CBS"/>
    <property type="match status" value="2"/>
</dbReference>
<dbReference type="PIRSF" id="PIRSF018148">
    <property type="entry name" value="UCP018148_CBS_YBR214w"/>
    <property type="match status" value="1"/>
</dbReference>
<dbReference type="SMART" id="SM00116">
    <property type="entry name" value="CBS"/>
    <property type="match status" value="3"/>
</dbReference>
<dbReference type="SUPFAM" id="SSF54631">
    <property type="entry name" value="CBS-domain pair"/>
    <property type="match status" value="2"/>
</dbReference>
<dbReference type="PROSITE" id="PS51371">
    <property type="entry name" value="CBS"/>
    <property type="match status" value="4"/>
</dbReference>
<name>SDS23_KLULA</name>
<proteinExistence type="inferred from homology"/>
<organism>
    <name type="scientific">Kluyveromyces lactis (strain ATCC 8585 / CBS 2359 / DSM 70799 / NBRC 1267 / NRRL Y-1140 / WM37)</name>
    <name type="common">Yeast</name>
    <name type="synonym">Candida sphaerica</name>
    <dbReference type="NCBI Taxonomy" id="284590"/>
    <lineage>
        <taxon>Eukaryota</taxon>
        <taxon>Fungi</taxon>
        <taxon>Dikarya</taxon>
        <taxon>Ascomycota</taxon>
        <taxon>Saccharomycotina</taxon>
        <taxon>Saccharomycetes</taxon>
        <taxon>Saccharomycetales</taxon>
        <taxon>Saccharomycetaceae</taxon>
        <taxon>Kluyveromyces</taxon>
    </lineage>
</organism>
<accession>Q6CUE1</accession>